<organism>
    <name type="scientific">Grapevine fleck virus (isolate Italy/MT48)</name>
    <name type="common">GFkV</name>
    <dbReference type="NCBI Taxonomy" id="652668"/>
    <lineage>
        <taxon>Viruses</taxon>
        <taxon>Riboviria</taxon>
        <taxon>Orthornavirae</taxon>
        <taxon>Kitrinoviricota</taxon>
        <taxon>Alsuviricetes</taxon>
        <taxon>Tymovirales</taxon>
        <taxon>Tymoviridae</taxon>
        <taxon>Maculavirus</taxon>
        <taxon>Maculavirus vitis</taxon>
    </lineage>
</organism>
<reference key="1">
    <citation type="journal article" date="2001" name="J. Gen. Virol.">
        <title>Complete nucleotide sequence and genome organization of Grapevine fleck virus.</title>
        <authorList>
            <person name="Sabanadzovic S."/>
            <person name="Ghanem-Sabanadzovic N.A."/>
            <person name="Saldarelli P."/>
            <person name="Martelli G.P."/>
        </authorList>
    </citation>
    <scope>NUCLEOTIDE SEQUENCE [GENOMIC RNA]</scope>
</reference>
<evidence type="ECO:0000250" key="1">
    <source>
        <dbReference type="UniProtKB" id="P20125"/>
    </source>
</evidence>
<evidence type="ECO:0000256" key="2">
    <source>
        <dbReference type="SAM" id="MobiDB-lite"/>
    </source>
</evidence>
<evidence type="ECO:0000305" key="3"/>
<comment type="function">
    <text evidence="1">Self-assembles to form a T=3 icosahedral capsid composed of 180 copies of the capsid protein. The capsid encapsulates the single-stranded RNA genome.</text>
</comment>
<comment type="subcellular location">
    <subcellularLocation>
        <location evidence="1">Virion</location>
    </subcellularLocation>
</comment>
<comment type="similarity">
    <text evidence="3">Belongs to the tymoviruses capsid protein family.</text>
</comment>
<sequence length="230" mass="24353">MSLPADLLLGAISSLLRNPPTSDAASPSADQPAVSSSRSDSRLVSAPLPAAPPAPTAIARNPRVSIHLPFQFLWYDITGTESSYTSLSIASRPEVVTVARPYRHARLTSLEAFVQPTASSATYPQTVDLCWTIDSVTPARSEILSVFGAQRIAWGSVHFSAPILLPAELSSLNPTIKDSVTYTDCPRLTCGFYRNDACVALGSSAPICGSILIRGVIECSAPINRPTPSS</sequence>
<name>CAPSD_GFKVM</name>
<accession>Q8UZB5</accession>
<protein>
    <recommendedName>
        <fullName>Capsid protein</fullName>
        <shortName>CP</shortName>
    </recommendedName>
    <alternativeName>
        <fullName>Coat protein</fullName>
    </alternativeName>
    <alternativeName>
        <fullName>Virion protein</fullName>
    </alternativeName>
</protein>
<dbReference type="EMBL" id="AJ309022">
    <property type="protein sequence ID" value="CAC84401.1"/>
    <property type="molecule type" value="Genomic_RNA"/>
</dbReference>
<dbReference type="RefSeq" id="NP_542613.1">
    <property type="nucleotide sequence ID" value="NC_003347.1"/>
</dbReference>
<dbReference type="SMR" id="Q8UZB5"/>
<dbReference type="GeneID" id="929659"/>
<dbReference type="KEGG" id="vg:929659"/>
<dbReference type="Proteomes" id="UP000000399">
    <property type="component" value="Segment"/>
</dbReference>
<dbReference type="GO" id="GO:0039617">
    <property type="term" value="C:T=3 icosahedral viral capsid"/>
    <property type="evidence" value="ECO:0007669"/>
    <property type="project" value="UniProtKB-KW"/>
</dbReference>
<dbReference type="GO" id="GO:0005198">
    <property type="term" value="F:structural molecule activity"/>
    <property type="evidence" value="ECO:0007669"/>
    <property type="project" value="InterPro"/>
</dbReference>
<dbReference type="Gene3D" id="2.60.120.20">
    <property type="match status" value="1"/>
</dbReference>
<dbReference type="InterPro" id="IPR000574">
    <property type="entry name" value="Tymo_coat"/>
</dbReference>
<dbReference type="InterPro" id="IPR029053">
    <property type="entry name" value="Viral_coat"/>
</dbReference>
<dbReference type="Pfam" id="PF00983">
    <property type="entry name" value="Tymo_coat"/>
    <property type="match status" value="1"/>
</dbReference>
<dbReference type="SUPFAM" id="SSF88633">
    <property type="entry name" value="Positive stranded ssRNA viruses"/>
    <property type="match status" value="1"/>
</dbReference>
<organismHost>
    <name type="scientific">Vitis vinifera</name>
    <name type="common">Grape</name>
    <dbReference type="NCBI Taxonomy" id="29760"/>
</organismHost>
<keyword id="KW-0167">Capsid protein</keyword>
<keyword id="KW-1185">Reference proteome</keyword>
<keyword id="KW-1142">T=3 icosahedral capsid protein</keyword>
<keyword id="KW-0946">Virion</keyword>
<proteinExistence type="inferred from homology"/>
<feature type="chain" id="PRO_0000402501" description="Capsid protein">
    <location>
        <begin position="1"/>
        <end position="230"/>
    </location>
</feature>
<feature type="region of interest" description="Disordered" evidence="2">
    <location>
        <begin position="19"/>
        <end position="54"/>
    </location>
</feature>
<feature type="compositionally biased region" description="Low complexity" evidence="2">
    <location>
        <begin position="19"/>
        <end position="48"/>
    </location>
</feature>